<sequence>MAGRGGRALLALCGALAACGWLLGAEAQEPGAPAAGMRRRRRLQQEDGISFEYHRYPELREALVSVWLQCTAISRIYTVGRSFEGRELLVIELSDNPGVHEPGEPEFKYIGNMHGNEAVGRELLIFLAQYLRNEYQKGNETIVNLIHSTRIHIMPSLNPDGFEKAASQPGELKDWFVGRSNAQGIDLNRNFPDLDRIVYVNEKEGGPNNHLLKNMKKIVDQNTKLAPETKAVIHWIMDIPFVLSANLHGGDLVANYPYDETRSGSAHEYSSSPDDAIFQSLARAYSSFNPAMSNPNRPPCRKNDDDSSFVDGTTNGGAWYSVPGGMQDFNYLSSNCFEITVELSCEKFPPEETLKTYWEDNKNSLISYLEQIHRGVKGFVRDLQGNPIANATISVEGIDHDVTSAKDGDYWRLLIPGNYKLTASAPGYLAITKKVAVPYSPAVGVDFELESFSERKEEEKEELMEWWKMMSETLNF</sequence>
<protein>
    <recommendedName>
        <fullName>Carboxypeptidase E</fullName>
        <shortName>CPE</shortName>
        <ecNumber>3.4.17.10</ecNumber>
    </recommendedName>
    <alternativeName>
        <fullName>Carboxypeptidase H</fullName>
        <shortName>CPH</shortName>
    </alternativeName>
    <alternativeName>
        <fullName>Enkephalin convertase</fullName>
    </alternativeName>
    <alternativeName>
        <fullName>Prohormone-processing carboxypeptidase</fullName>
    </alternativeName>
</protein>
<proteinExistence type="evidence at transcript level"/>
<dbReference type="EC" id="3.4.17.10"/>
<dbReference type="EMBL" id="AB169871">
    <property type="protein sequence ID" value="BAE01952.1"/>
    <property type="molecule type" value="mRNA"/>
</dbReference>
<dbReference type="RefSeq" id="NP_001272091.1">
    <property type="nucleotide sequence ID" value="NM_001285162.1"/>
</dbReference>
<dbReference type="SMR" id="Q4R4M3"/>
<dbReference type="STRING" id="9541.ENSMFAP00000037520"/>
<dbReference type="MEROPS" id="M14.005"/>
<dbReference type="GlyCosmos" id="Q4R4M3">
    <property type="glycosylation" value="2 sites, No reported glycans"/>
</dbReference>
<dbReference type="eggNOG" id="KOG2649">
    <property type="taxonomic scope" value="Eukaryota"/>
</dbReference>
<dbReference type="Proteomes" id="UP000233100">
    <property type="component" value="Unplaced"/>
</dbReference>
<dbReference type="GO" id="GO:0005615">
    <property type="term" value="C:extracellular space"/>
    <property type="evidence" value="ECO:0007669"/>
    <property type="project" value="TreeGrafter"/>
</dbReference>
<dbReference type="GO" id="GO:0030658">
    <property type="term" value="C:transport vesicle membrane"/>
    <property type="evidence" value="ECO:0007669"/>
    <property type="project" value="UniProtKB-SubCell"/>
</dbReference>
<dbReference type="GO" id="GO:0004181">
    <property type="term" value="F:metallocarboxypeptidase activity"/>
    <property type="evidence" value="ECO:0007669"/>
    <property type="project" value="UniProtKB-EC"/>
</dbReference>
<dbReference type="GO" id="GO:0008270">
    <property type="term" value="F:zinc ion binding"/>
    <property type="evidence" value="ECO:0007669"/>
    <property type="project" value="InterPro"/>
</dbReference>
<dbReference type="GO" id="GO:0006518">
    <property type="term" value="P:peptide metabolic process"/>
    <property type="evidence" value="ECO:0007669"/>
    <property type="project" value="TreeGrafter"/>
</dbReference>
<dbReference type="GO" id="GO:0016485">
    <property type="term" value="P:protein processing"/>
    <property type="evidence" value="ECO:0007669"/>
    <property type="project" value="TreeGrafter"/>
</dbReference>
<dbReference type="CDD" id="cd03865">
    <property type="entry name" value="M14_CPE"/>
    <property type="match status" value="1"/>
</dbReference>
<dbReference type="CDD" id="cd11308">
    <property type="entry name" value="Peptidase_M14NE-CP-C_like"/>
    <property type="match status" value="1"/>
</dbReference>
<dbReference type="FunFam" id="2.60.40.1120:FF:000004">
    <property type="entry name" value="Carboxypeptidase E"/>
    <property type="match status" value="1"/>
</dbReference>
<dbReference type="FunFam" id="3.40.630.10:FF:000013">
    <property type="entry name" value="carboxypeptidase N catalytic chain"/>
    <property type="match status" value="1"/>
</dbReference>
<dbReference type="Gene3D" id="2.60.40.1120">
    <property type="entry name" value="Carboxypeptidase-like, regulatory domain"/>
    <property type="match status" value="1"/>
</dbReference>
<dbReference type="Gene3D" id="3.40.630.10">
    <property type="entry name" value="Zn peptidases"/>
    <property type="match status" value="1"/>
</dbReference>
<dbReference type="InterPro" id="IPR008969">
    <property type="entry name" value="CarboxyPept-like_regulatory"/>
</dbReference>
<dbReference type="InterPro" id="IPR034232">
    <property type="entry name" value="M14_CPE_CPD"/>
</dbReference>
<dbReference type="InterPro" id="IPR000834">
    <property type="entry name" value="Peptidase_M14"/>
</dbReference>
<dbReference type="InterPro" id="IPR050753">
    <property type="entry name" value="Peptidase_M14_domain"/>
</dbReference>
<dbReference type="PANTHER" id="PTHR11532:SF92">
    <property type="entry name" value="CARBOXYPEPTIDASE E"/>
    <property type="match status" value="1"/>
</dbReference>
<dbReference type="PANTHER" id="PTHR11532">
    <property type="entry name" value="PROTEASE M14 CARBOXYPEPTIDASE"/>
    <property type="match status" value="1"/>
</dbReference>
<dbReference type="Pfam" id="PF13620">
    <property type="entry name" value="CarboxypepD_reg"/>
    <property type="match status" value="1"/>
</dbReference>
<dbReference type="Pfam" id="PF00246">
    <property type="entry name" value="Peptidase_M14"/>
    <property type="match status" value="1"/>
</dbReference>
<dbReference type="PRINTS" id="PR00765">
    <property type="entry name" value="CRBOXYPTASEA"/>
</dbReference>
<dbReference type="SMART" id="SM00631">
    <property type="entry name" value="Zn_pept"/>
    <property type="match status" value="1"/>
</dbReference>
<dbReference type="SUPFAM" id="SSF49464">
    <property type="entry name" value="Carboxypeptidase regulatory domain-like"/>
    <property type="match status" value="1"/>
</dbReference>
<dbReference type="SUPFAM" id="SSF53187">
    <property type="entry name" value="Zn-dependent exopeptidases"/>
    <property type="match status" value="1"/>
</dbReference>
<dbReference type="PROSITE" id="PS00132">
    <property type="entry name" value="CARBOXYPEPT_ZN_1"/>
    <property type="match status" value="1"/>
</dbReference>
<dbReference type="PROSITE" id="PS00133">
    <property type="entry name" value="CARBOXYPEPT_ZN_2"/>
    <property type="match status" value="1"/>
</dbReference>
<dbReference type="PROSITE" id="PS52035">
    <property type="entry name" value="PEPTIDASE_M14"/>
    <property type="match status" value="1"/>
</dbReference>
<accession>Q4R4M3</accession>
<keyword id="KW-0121">Carboxypeptidase</keyword>
<keyword id="KW-0165">Cleavage on pair of basic residues</keyword>
<keyword id="KW-0968">Cytoplasmic vesicle</keyword>
<keyword id="KW-0325">Glycoprotein</keyword>
<keyword id="KW-0378">Hydrolase</keyword>
<keyword id="KW-0472">Membrane</keyword>
<keyword id="KW-0479">Metal-binding</keyword>
<keyword id="KW-0482">Metalloprotease</keyword>
<keyword id="KW-0645">Protease</keyword>
<keyword id="KW-1185">Reference proteome</keyword>
<keyword id="KW-0964">Secreted</keyword>
<keyword id="KW-0732">Signal</keyword>
<keyword id="KW-0862">Zinc</keyword>
<keyword id="KW-0865">Zymogen</keyword>
<organism>
    <name type="scientific">Macaca fascicularis</name>
    <name type="common">Crab-eating macaque</name>
    <name type="synonym">Cynomolgus monkey</name>
    <dbReference type="NCBI Taxonomy" id="9541"/>
    <lineage>
        <taxon>Eukaryota</taxon>
        <taxon>Metazoa</taxon>
        <taxon>Chordata</taxon>
        <taxon>Craniata</taxon>
        <taxon>Vertebrata</taxon>
        <taxon>Euteleostomi</taxon>
        <taxon>Mammalia</taxon>
        <taxon>Eutheria</taxon>
        <taxon>Euarchontoglires</taxon>
        <taxon>Primates</taxon>
        <taxon>Haplorrhini</taxon>
        <taxon>Catarrhini</taxon>
        <taxon>Cercopithecidae</taxon>
        <taxon>Cercopithecinae</taxon>
        <taxon>Macaca</taxon>
    </lineage>
</organism>
<feature type="signal peptide" evidence="4">
    <location>
        <begin position="1"/>
        <end position="25"/>
    </location>
</feature>
<feature type="propeptide" id="PRO_0000280814" description="Activation peptide">
    <location>
        <begin position="26"/>
        <end position="42"/>
    </location>
</feature>
<feature type="chain" id="PRO_0000280815" description="Carboxypeptidase E">
    <location>
        <begin position="43"/>
        <end position="476"/>
    </location>
</feature>
<feature type="domain" description="Peptidase M14" evidence="5">
    <location>
        <begin position="52"/>
        <end position="372"/>
    </location>
</feature>
<feature type="active site" description="Proton donor/acceptor" evidence="5">
    <location>
        <position position="342"/>
    </location>
</feature>
<feature type="binding site" evidence="5">
    <location>
        <position position="114"/>
    </location>
    <ligand>
        <name>Zn(2+)</name>
        <dbReference type="ChEBI" id="CHEBI:29105"/>
        <note>catalytic</note>
    </ligand>
</feature>
<feature type="binding site" evidence="5">
    <location>
        <position position="117"/>
    </location>
    <ligand>
        <name>Zn(2+)</name>
        <dbReference type="ChEBI" id="CHEBI:29105"/>
        <note>catalytic</note>
    </ligand>
</feature>
<feature type="binding site" evidence="5">
    <location>
        <position position="248"/>
    </location>
    <ligand>
        <name>Zn(2+)</name>
        <dbReference type="ChEBI" id="CHEBI:29105"/>
        <note>catalytic</note>
    </ligand>
</feature>
<feature type="glycosylation site" description="N-linked (GlcNAc...) asparagine" evidence="4">
    <location>
        <position position="139"/>
    </location>
</feature>
<feature type="glycosylation site" description="N-linked (GlcNAc...) asparagine" evidence="4">
    <location>
        <position position="390"/>
    </location>
</feature>
<reference key="1">
    <citation type="submission" date="2005-06" db="EMBL/GenBank/DDBJ databases">
        <title>DNA sequences of macaque genes expressed in brain or testis and its evolutionary implications.</title>
        <authorList>
            <consortium name="International consortium for macaque cDNA sequencing and analysis"/>
        </authorList>
    </citation>
    <scope>NUCLEOTIDE SEQUENCE [LARGE SCALE MRNA]</scope>
    <source>
        <tissue>Frontal cortex</tissue>
    </source>
</reference>
<name>CBPE_MACFA</name>
<gene>
    <name type="primary">CPE</name>
    <name type="ORF">QflA-11442</name>
</gene>
<evidence type="ECO:0000250" key="1">
    <source>
        <dbReference type="UniProtKB" id="P00730"/>
    </source>
</evidence>
<evidence type="ECO:0000250" key="2">
    <source>
        <dbReference type="UniProtKB" id="P15087"/>
    </source>
</evidence>
<evidence type="ECO:0000250" key="3">
    <source>
        <dbReference type="UniProtKB" id="Q00493"/>
    </source>
</evidence>
<evidence type="ECO:0000255" key="4"/>
<evidence type="ECO:0000255" key="5">
    <source>
        <dbReference type="PROSITE-ProRule" id="PRU01379"/>
    </source>
</evidence>
<evidence type="ECO:0000305" key="6"/>
<comment type="function">
    <text evidence="3">Sorting receptor that directs prohormones to the regulated secretory pathway. Also acts as a prohormone processing enzyme in neuro/endocrine cells, removing dibasic residues from the C-terminal end of peptide hormone precursors after initial endoprotease cleavage.</text>
</comment>
<comment type="catalytic activity">
    <reaction>
        <text>Release of C-terminal arginine or lysine residues from polypeptides.</text>
        <dbReference type="EC" id="3.4.17.10"/>
    </reaction>
</comment>
<comment type="cofactor">
    <cofactor evidence="1">
        <name>Zn(2+)</name>
        <dbReference type="ChEBI" id="CHEBI:29105"/>
    </cofactor>
    <text evidence="1">Binds 1 zinc ion per subunit.</text>
</comment>
<comment type="subunit">
    <text evidence="3">Interacts with secretogranin III/SCG3.</text>
</comment>
<comment type="subcellular location">
    <subcellularLocation>
        <location evidence="3">Cytoplasmic vesicle</location>
        <location evidence="3">Secretory vesicle</location>
    </subcellularLocation>
    <subcellularLocation>
        <location evidence="2">Cytoplasmic vesicle</location>
        <location evidence="2">Secretory vesicle membrane</location>
        <topology evidence="2">Peripheral membrane protein</topology>
    </subcellularLocation>
    <subcellularLocation>
        <location evidence="2">Secreted</location>
    </subcellularLocation>
    <text evidence="3">Associated with the secretory granule membrane through direct binding to lipid rafts in intragranular conditions.</text>
</comment>
<comment type="similarity">
    <text evidence="6">Belongs to the peptidase M14 family.</text>
</comment>